<dbReference type="EMBL" id="CU207211">
    <property type="protein sequence ID" value="CAL62323.1"/>
    <property type="molecule type" value="Genomic_DNA"/>
</dbReference>
<dbReference type="SMR" id="A4G736"/>
<dbReference type="STRING" id="204773.HEAR2187"/>
<dbReference type="KEGG" id="har:HEAR2187"/>
<dbReference type="eggNOG" id="COG2919">
    <property type="taxonomic scope" value="Bacteria"/>
</dbReference>
<dbReference type="HOGENOM" id="CLU_134863_5_0_4"/>
<dbReference type="OrthoDB" id="7061211at2"/>
<dbReference type="Proteomes" id="UP000006697">
    <property type="component" value="Chromosome"/>
</dbReference>
<dbReference type="GO" id="GO:0032153">
    <property type="term" value="C:cell division site"/>
    <property type="evidence" value="ECO:0007669"/>
    <property type="project" value="UniProtKB-UniRule"/>
</dbReference>
<dbReference type="GO" id="GO:0030428">
    <property type="term" value="C:cell septum"/>
    <property type="evidence" value="ECO:0007669"/>
    <property type="project" value="TreeGrafter"/>
</dbReference>
<dbReference type="GO" id="GO:0005886">
    <property type="term" value="C:plasma membrane"/>
    <property type="evidence" value="ECO:0007669"/>
    <property type="project" value="UniProtKB-SubCell"/>
</dbReference>
<dbReference type="GO" id="GO:0043093">
    <property type="term" value="P:FtsZ-dependent cytokinesis"/>
    <property type="evidence" value="ECO:0007669"/>
    <property type="project" value="UniProtKB-UniRule"/>
</dbReference>
<dbReference type="HAMAP" id="MF_00599">
    <property type="entry name" value="FtsB"/>
    <property type="match status" value="1"/>
</dbReference>
<dbReference type="InterPro" id="IPR023081">
    <property type="entry name" value="Cell_div_FtsB"/>
</dbReference>
<dbReference type="InterPro" id="IPR007060">
    <property type="entry name" value="FtsL/DivIC"/>
</dbReference>
<dbReference type="NCBIfam" id="NF002058">
    <property type="entry name" value="PRK00888.1"/>
    <property type="match status" value="1"/>
</dbReference>
<dbReference type="PANTHER" id="PTHR37485">
    <property type="entry name" value="CELL DIVISION PROTEIN FTSB"/>
    <property type="match status" value="1"/>
</dbReference>
<dbReference type="PANTHER" id="PTHR37485:SF1">
    <property type="entry name" value="CELL DIVISION PROTEIN FTSB"/>
    <property type="match status" value="1"/>
</dbReference>
<dbReference type="Pfam" id="PF04977">
    <property type="entry name" value="DivIC"/>
    <property type="match status" value="1"/>
</dbReference>
<comment type="function">
    <text evidence="1">Essential cell division protein. May link together the upstream cell division proteins, which are predominantly cytoplasmic, with the downstream cell division proteins, which are predominantly periplasmic.</text>
</comment>
<comment type="subunit">
    <text evidence="1">Part of a complex composed of FtsB, FtsL and FtsQ.</text>
</comment>
<comment type="subcellular location">
    <subcellularLocation>
        <location evidence="1">Cell inner membrane</location>
        <topology evidence="1">Single-pass type II membrane protein</topology>
    </subcellularLocation>
    <text evidence="1">Localizes to the division septum.</text>
</comment>
<comment type="similarity">
    <text evidence="1">Belongs to the FtsB family.</text>
</comment>
<gene>
    <name evidence="1" type="primary">ftsB</name>
    <name type="ordered locus">HEAR2187</name>
</gene>
<evidence type="ECO:0000255" key="1">
    <source>
        <dbReference type="HAMAP-Rule" id="MF_00599"/>
    </source>
</evidence>
<organism>
    <name type="scientific">Herminiimonas arsenicoxydans</name>
    <dbReference type="NCBI Taxonomy" id="204773"/>
    <lineage>
        <taxon>Bacteria</taxon>
        <taxon>Pseudomonadati</taxon>
        <taxon>Pseudomonadota</taxon>
        <taxon>Betaproteobacteria</taxon>
        <taxon>Burkholderiales</taxon>
        <taxon>Oxalobacteraceae</taxon>
        <taxon>Herminiimonas</taxon>
    </lineage>
</organism>
<accession>A4G736</accession>
<reference key="1">
    <citation type="journal article" date="2007" name="PLoS Genet.">
        <title>A tale of two oxidation states: bacterial colonization of arsenic-rich environments.</title>
        <authorList>
            <person name="Muller D."/>
            <person name="Medigue C."/>
            <person name="Koechler S."/>
            <person name="Barbe V."/>
            <person name="Barakat M."/>
            <person name="Talla E."/>
            <person name="Bonnefoy V."/>
            <person name="Krin E."/>
            <person name="Arsene-Ploetze F."/>
            <person name="Carapito C."/>
            <person name="Chandler M."/>
            <person name="Cournoyer B."/>
            <person name="Cruveiller S."/>
            <person name="Dossat C."/>
            <person name="Duval S."/>
            <person name="Heymann M."/>
            <person name="Leize E."/>
            <person name="Lieutaud A."/>
            <person name="Lievremont D."/>
            <person name="Makita Y."/>
            <person name="Mangenot S."/>
            <person name="Nitschke W."/>
            <person name="Ortet P."/>
            <person name="Perdrial N."/>
            <person name="Schoepp B."/>
            <person name="Siguier P."/>
            <person name="Simeonova D.D."/>
            <person name="Rouy Z."/>
            <person name="Segurens B."/>
            <person name="Turlin E."/>
            <person name="Vallenet D."/>
            <person name="van Dorsselaer A."/>
            <person name="Weiss S."/>
            <person name="Weissenbach J."/>
            <person name="Lett M.-C."/>
            <person name="Danchin A."/>
            <person name="Bertin P.N."/>
        </authorList>
    </citation>
    <scope>NUCLEOTIDE SEQUENCE [LARGE SCALE GENOMIC DNA]</scope>
    <source>
        <strain>ULPAs1</strain>
    </source>
</reference>
<proteinExistence type="inferred from homology"/>
<sequence>MRLIILCLAALVLLIQFPLWLGKGGWLRVWDLDQQVIAAQKKNDELRARNAKLNSEVQDLKEGTGAVEERARYELGMIKENEIFVQVLDPNKKSSFVSIPPPKIEPKEKR</sequence>
<name>FTSB_HERAR</name>
<protein>
    <recommendedName>
        <fullName evidence="1">Cell division protein FtsB</fullName>
    </recommendedName>
</protein>
<feature type="chain" id="PRO_1000025705" description="Cell division protein FtsB">
    <location>
        <begin position="1"/>
        <end position="110"/>
    </location>
</feature>
<feature type="topological domain" description="Cytoplasmic" evidence="1">
    <location>
        <begin position="1"/>
        <end position="3"/>
    </location>
</feature>
<feature type="transmembrane region" description="Helical" evidence="1">
    <location>
        <begin position="4"/>
        <end position="21"/>
    </location>
</feature>
<feature type="topological domain" description="Periplasmic" evidence="1">
    <location>
        <begin position="22"/>
        <end position="110"/>
    </location>
</feature>
<feature type="coiled-coil region" evidence="1">
    <location>
        <begin position="31"/>
        <end position="64"/>
    </location>
</feature>
<keyword id="KW-0131">Cell cycle</keyword>
<keyword id="KW-0132">Cell division</keyword>
<keyword id="KW-0997">Cell inner membrane</keyword>
<keyword id="KW-1003">Cell membrane</keyword>
<keyword id="KW-0175">Coiled coil</keyword>
<keyword id="KW-0472">Membrane</keyword>
<keyword id="KW-1185">Reference proteome</keyword>
<keyword id="KW-0812">Transmembrane</keyword>
<keyword id="KW-1133">Transmembrane helix</keyword>